<evidence type="ECO:0000250" key="1"/>
<evidence type="ECO:0000250" key="2">
    <source>
        <dbReference type="UniProtKB" id="P28647"/>
    </source>
</evidence>
<evidence type="ECO:0000250" key="3">
    <source>
        <dbReference type="UniProtKB" id="Q28309"/>
    </source>
</evidence>
<evidence type="ECO:0000255" key="4"/>
<evidence type="ECO:0000255" key="5">
    <source>
        <dbReference type="PROSITE-ProRule" id="PRU00521"/>
    </source>
</evidence>
<evidence type="ECO:0000269" key="6">
    <source>
    </source>
</evidence>
<gene>
    <name type="primary">ADORA3</name>
</gene>
<feature type="chain" id="PRO_0000069014" description="Adenosine receptor A3">
    <location>
        <begin position="1"/>
        <end position="317"/>
    </location>
</feature>
<feature type="topological domain" description="Extracellular" evidence="1">
    <location>
        <begin position="1"/>
        <end position="14"/>
    </location>
</feature>
<feature type="transmembrane region" description="Helical; Name=1" evidence="1">
    <location>
        <begin position="15"/>
        <end position="37"/>
    </location>
</feature>
<feature type="topological domain" description="Cytoplasmic" evidence="1">
    <location>
        <begin position="38"/>
        <end position="48"/>
    </location>
</feature>
<feature type="transmembrane region" description="Helical; Name=2" evidence="1">
    <location>
        <begin position="49"/>
        <end position="72"/>
    </location>
</feature>
<feature type="topological domain" description="Extracellular" evidence="1">
    <location>
        <begin position="73"/>
        <end position="84"/>
    </location>
</feature>
<feature type="transmembrane region" description="Helical; Name=3" evidence="1">
    <location>
        <begin position="85"/>
        <end position="106"/>
    </location>
</feature>
<feature type="topological domain" description="Cytoplasmic" evidence="1">
    <location>
        <begin position="107"/>
        <end position="126"/>
    </location>
</feature>
<feature type="transmembrane region" description="Helical; Name=4" evidence="1">
    <location>
        <begin position="127"/>
        <end position="148"/>
    </location>
</feature>
<feature type="topological domain" description="Extracellular" evidence="1">
    <location>
        <begin position="149"/>
        <end position="176"/>
    </location>
</feature>
<feature type="transmembrane region" description="Helical; Name=5" evidence="1">
    <location>
        <begin position="177"/>
        <end position="197"/>
    </location>
</feature>
<feature type="topological domain" description="Cytoplasmic" evidence="1">
    <location>
        <begin position="198"/>
        <end position="230"/>
    </location>
</feature>
<feature type="transmembrane region" description="Helical; Name=6" evidence="1">
    <location>
        <begin position="231"/>
        <end position="254"/>
    </location>
</feature>
<feature type="topological domain" description="Extracellular" evidence="1">
    <location>
        <begin position="255"/>
        <end position="260"/>
    </location>
</feature>
<feature type="transmembrane region" description="Helical; Name=7" evidence="1">
    <location>
        <begin position="261"/>
        <end position="283"/>
    </location>
</feature>
<feature type="topological domain" description="Cytoplasmic" evidence="1">
    <location>
        <begin position="284"/>
        <end position="317"/>
    </location>
</feature>
<feature type="lipid moiety-binding region" description="S-palmitoyl cysteine" evidence="4">
    <location>
        <position position="302"/>
    </location>
</feature>
<feature type="glycosylation site" description="N-linked (GlcNAc...) asparagine" evidence="4">
    <location>
        <position position="4"/>
    </location>
</feature>
<feature type="glycosylation site" description="N-linked (GlcNAc...) asparagine" evidence="4">
    <location>
        <position position="159"/>
    </location>
</feature>
<feature type="disulfide bond" evidence="5">
    <location>
        <begin position="83"/>
        <end position="165"/>
    </location>
</feature>
<protein>
    <recommendedName>
        <fullName>Adenosine receptor A3</fullName>
    </recommendedName>
</protein>
<comment type="function">
    <text evidence="6">Receptor for adenosine. The activity of this receptor is mediated by G proteins which inhibits adenylyl cyclase.</text>
</comment>
<comment type="subcellular location">
    <subcellularLocation>
        <location evidence="3">Cell membrane</location>
        <topology evidence="4">Multi-pass membrane protein</topology>
    </subcellularLocation>
</comment>
<comment type="tissue specificity">
    <text evidence="6">Most abundant in lung, spleen and pineal gland. Moderate expression in brain, kidney and testis.</text>
</comment>
<comment type="PTM">
    <text evidence="2">Phosphorylation on Thr-315 and Ser-316 may be crucial for rapid desensitization. Phosphorylation on Thr-315 may be necessary for phosphorylation on Ser-316 to occur.</text>
</comment>
<comment type="similarity">
    <text evidence="5">Belongs to the G-protein coupled receptor 1 family.</text>
</comment>
<name>AA3R_SHEEP</name>
<proteinExistence type="evidence at transcript level"/>
<keyword id="KW-1003">Cell membrane</keyword>
<keyword id="KW-1015">Disulfide bond</keyword>
<keyword id="KW-0297">G-protein coupled receptor</keyword>
<keyword id="KW-0325">Glycoprotein</keyword>
<keyword id="KW-0449">Lipoprotein</keyword>
<keyword id="KW-0472">Membrane</keyword>
<keyword id="KW-0564">Palmitate</keyword>
<keyword id="KW-0597">Phosphoprotein</keyword>
<keyword id="KW-0675">Receptor</keyword>
<keyword id="KW-1185">Reference proteome</keyword>
<keyword id="KW-0807">Transducer</keyword>
<keyword id="KW-0812">Transmembrane</keyword>
<keyword id="KW-1133">Transmembrane helix</keyword>
<sequence>MPVNSTAVSWTSVTYITVEILIGLCAIVGNVLVIWVVKLNPSLQTTTFYFIVSLALADIAVGVLVMPLAIVISLGVTIHFYSCLFMTCLMLIFTHASIMSLLAIAVDRYLRVKLTVRYRRVTTQRRIWLALGLCWLVSFLVGLTPMFGWNMKLSSADENLTFLPCRFRSVMRMDYMVYFSFFLWILVPLVVMCAIYFDIFYIIRNRLSQSFSGSRETGAFYGREFKTAKSLLLVLFLFALCWLPLSIINCILYFDGQVPQTVLYLGILLSHANSMMNPIVYAYKIKKFKETYLLILKACVMCQPSKSMDPSTEQTSE</sequence>
<dbReference type="EMBL" id="S65334">
    <property type="protein sequence ID" value="AAB28171.1"/>
    <property type="molecule type" value="mRNA"/>
</dbReference>
<dbReference type="RefSeq" id="NP_001009775.2">
    <property type="nucleotide sequence ID" value="NM_001009775.2"/>
</dbReference>
<dbReference type="SMR" id="P35342"/>
<dbReference type="STRING" id="9940.ENSOARP00000021084"/>
<dbReference type="BindingDB" id="P35342"/>
<dbReference type="ChEMBL" id="CHEMBL3309064"/>
<dbReference type="GlyCosmos" id="P35342">
    <property type="glycosylation" value="2 sites, No reported glycans"/>
</dbReference>
<dbReference type="PaxDb" id="9940-ENSOARP00000021084"/>
<dbReference type="GeneID" id="443330"/>
<dbReference type="KEGG" id="oas:443330"/>
<dbReference type="CTD" id="140"/>
<dbReference type="eggNOG" id="KOG3656">
    <property type="taxonomic scope" value="Eukaryota"/>
</dbReference>
<dbReference type="OrthoDB" id="284782at2759"/>
<dbReference type="Proteomes" id="UP000002356">
    <property type="component" value="Unplaced"/>
</dbReference>
<dbReference type="GO" id="GO:0030425">
    <property type="term" value="C:dendrite"/>
    <property type="evidence" value="ECO:0007669"/>
    <property type="project" value="TreeGrafter"/>
</dbReference>
<dbReference type="GO" id="GO:0005886">
    <property type="term" value="C:plasma membrane"/>
    <property type="evidence" value="ECO:0007669"/>
    <property type="project" value="UniProtKB-SubCell"/>
</dbReference>
<dbReference type="GO" id="GO:0045202">
    <property type="term" value="C:synapse"/>
    <property type="evidence" value="ECO:0007669"/>
    <property type="project" value="TreeGrafter"/>
</dbReference>
<dbReference type="GO" id="GO:0001609">
    <property type="term" value="F:G protein-coupled adenosine receptor activity"/>
    <property type="evidence" value="ECO:0007669"/>
    <property type="project" value="InterPro"/>
</dbReference>
<dbReference type="CDD" id="cd15070">
    <property type="entry name" value="7tmA_Adenosine_R_A3"/>
    <property type="match status" value="1"/>
</dbReference>
<dbReference type="FunFam" id="1.20.1070.10:FF:000061">
    <property type="entry name" value="Adenosine receptor A2"/>
    <property type="match status" value="1"/>
</dbReference>
<dbReference type="Gene3D" id="1.20.1070.10">
    <property type="entry name" value="Rhodopsin 7-helix transmembrane proteins"/>
    <property type="match status" value="1"/>
</dbReference>
<dbReference type="InterPro" id="IPR000466">
    <property type="entry name" value="Adeno_A3_rcpt"/>
</dbReference>
<dbReference type="InterPro" id="IPR001634">
    <property type="entry name" value="Adenosn_rcpt"/>
</dbReference>
<dbReference type="InterPro" id="IPR000276">
    <property type="entry name" value="GPCR_Rhodpsn"/>
</dbReference>
<dbReference type="InterPro" id="IPR017452">
    <property type="entry name" value="GPCR_Rhodpsn_7TM"/>
</dbReference>
<dbReference type="PANTHER" id="PTHR24246:SF2">
    <property type="entry name" value="ADENOSINE RECEPTOR A3"/>
    <property type="match status" value="1"/>
</dbReference>
<dbReference type="PANTHER" id="PTHR24246">
    <property type="entry name" value="OLFACTORY RECEPTOR AND ADENOSINE RECEPTOR"/>
    <property type="match status" value="1"/>
</dbReference>
<dbReference type="Pfam" id="PF00001">
    <property type="entry name" value="7tm_1"/>
    <property type="match status" value="1"/>
</dbReference>
<dbReference type="PRINTS" id="PR00555">
    <property type="entry name" value="ADENOSINEA3R"/>
</dbReference>
<dbReference type="PRINTS" id="PR00424">
    <property type="entry name" value="ADENOSINER"/>
</dbReference>
<dbReference type="PRINTS" id="PR00237">
    <property type="entry name" value="GPCRRHODOPSN"/>
</dbReference>
<dbReference type="SMART" id="SM01381">
    <property type="entry name" value="7TM_GPCR_Srsx"/>
    <property type="match status" value="1"/>
</dbReference>
<dbReference type="SUPFAM" id="SSF81321">
    <property type="entry name" value="Family A G protein-coupled receptor-like"/>
    <property type="match status" value="1"/>
</dbReference>
<dbReference type="PROSITE" id="PS00237">
    <property type="entry name" value="G_PROTEIN_RECEP_F1_1"/>
    <property type="match status" value="1"/>
</dbReference>
<dbReference type="PROSITE" id="PS50262">
    <property type="entry name" value="G_PROTEIN_RECEP_F1_2"/>
    <property type="match status" value="1"/>
</dbReference>
<reference key="1">
    <citation type="journal article" date="1993" name="Mol. Pharmacol.">
        <title>Molecular cloning and functional expression of a sheep A3 adenosine receptor with widespread tissue distribution.</title>
        <authorList>
            <person name="Linden J."/>
            <person name="Taylor H.E."/>
            <person name="Robeva A.S."/>
            <person name="Tucker A.L."/>
            <person name="Stehle J.H."/>
            <person name="Rivkees S.A."/>
            <person name="Fink J.S."/>
            <person name="Reppert S.M."/>
        </authorList>
    </citation>
    <scope>NUCLEOTIDE SEQUENCE [MRNA]</scope>
    <scope>FUNCTION</scope>
    <scope>TISSUE SPECIFICITY</scope>
    <source>
        <tissue>Pituitary pars tuberalis</tissue>
    </source>
</reference>
<organism>
    <name type="scientific">Ovis aries</name>
    <name type="common">Sheep</name>
    <dbReference type="NCBI Taxonomy" id="9940"/>
    <lineage>
        <taxon>Eukaryota</taxon>
        <taxon>Metazoa</taxon>
        <taxon>Chordata</taxon>
        <taxon>Craniata</taxon>
        <taxon>Vertebrata</taxon>
        <taxon>Euteleostomi</taxon>
        <taxon>Mammalia</taxon>
        <taxon>Eutheria</taxon>
        <taxon>Laurasiatheria</taxon>
        <taxon>Artiodactyla</taxon>
        <taxon>Ruminantia</taxon>
        <taxon>Pecora</taxon>
        <taxon>Bovidae</taxon>
        <taxon>Caprinae</taxon>
        <taxon>Ovis</taxon>
    </lineage>
</organism>
<accession>P35342</accession>